<gene>
    <name type="primary">znf704</name>
    <name type="ORF">si:ch211-203l9.2</name>
</gene>
<name>ZN704_DANRE</name>
<feature type="chain" id="PRO_0000288826" description="Zinc finger protein 704">
    <location>
        <begin position="1"/>
        <end position="501"/>
    </location>
</feature>
<feature type="zinc finger region" description="C2H2-type" evidence="2">
    <location>
        <begin position="281"/>
        <end position="306"/>
    </location>
</feature>
<feature type="region of interest" description="Disordered" evidence="3">
    <location>
        <begin position="80"/>
        <end position="138"/>
    </location>
</feature>
<feature type="region of interest" description="Disordered" evidence="3">
    <location>
        <begin position="183"/>
        <end position="203"/>
    </location>
</feature>
<feature type="region of interest" description="Disordered" evidence="3">
    <location>
        <begin position="216"/>
        <end position="267"/>
    </location>
</feature>
<feature type="region of interest" description="Disordered" evidence="3">
    <location>
        <begin position="340"/>
        <end position="380"/>
    </location>
</feature>
<feature type="region of interest" description="Disordered" evidence="3">
    <location>
        <begin position="398"/>
        <end position="419"/>
    </location>
</feature>
<feature type="region of interest" description="Disordered" evidence="3">
    <location>
        <begin position="427"/>
        <end position="446"/>
    </location>
</feature>
<feature type="region of interest" description="Disordered" evidence="3">
    <location>
        <begin position="453"/>
        <end position="472"/>
    </location>
</feature>
<feature type="short sequence motif" description="CR1" evidence="1">
    <location>
        <begin position="472"/>
        <end position="476"/>
    </location>
</feature>
<feature type="short sequence motif" description="CR2" evidence="1">
    <location>
        <begin position="490"/>
        <end position="494"/>
    </location>
</feature>
<feature type="compositionally biased region" description="Polar residues" evidence="3">
    <location>
        <begin position="80"/>
        <end position="96"/>
    </location>
</feature>
<feature type="compositionally biased region" description="Basic and acidic residues" evidence="3">
    <location>
        <begin position="115"/>
        <end position="137"/>
    </location>
</feature>
<feature type="compositionally biased region" description="Low complexity" evidence="3">
    <location>
        <begin position="368"/>
        <end position="380"/>
    </location>
</feature>
<sequence>MHTRRLVKRSVIGSRVYAPGLTGDAAPLTGVIQAVKQDNRDASTGHRRNVYTVLMQDGSVKEYSEEEIAQMTAKAPLKSSLKSTCNGGQRDGLTQGQNGGVQRGEALSLSPESTEEPRVLEHKRTGRALETEKDHTRSVSLLEQKRKVVSSSIDVPQARKSEEEVDMDKVTAAMVLTSLSTSPLVRSPPVKVSEGLNGSWKDGGFTPSSYSSSGYWSWSAPSDQSNPSTPSPPLSADSFKPFRMPSLSGPPDDNIDEHDGNSLLFDEPIPRKRKNSMKVMFKCLWKNCGKVLSTAAGIQRHIRTVHLGRNCDSECSDGEEDFYYTEIKLNTDSVADGLSSLSPVSPSVLSPPPALDQRQPDGTNGTKSESSSSTPLSRSAPSALYLVHTDHAYQATTPVTIPSTSSTGFTPSSSSFSISWQSPPVTFTGTSASPTHSRTQGFGEQHSQTIAVLSSPPRAAGSLSRKSRGEGKKCRKVYGMENRDMWCTACRWKKACQRFVD</sequence>
<comment type="function">
    <text evidence="1">Transcription factor.</text>
</comment>
<comment type="subcellular location">
    <subcellularLocation>
        <location evidence="1">Nucleus</location>
    </subcellularLocation>
</comment>
<comment type="domain">
    <text evidence="1">The CR1 and CR2 motifs mediate sequence-specific DNA binding.</text>
</comment>
<keyword id="KW-0238">DNA-binding</keyword>
<keyword id="KW-0479">Metal-binding</keyword>
<keyword id="KW-0539">Nucleus</keyword>
<keyword id="KW-1185">Reference proteome</keyword>
<keyword id="KW-0804">Transcription</keyword>
<keyword id="KW-0805">Transcription regulation</keyword>
<keyword id="KW-0862">Zinc</keyword>
<keyword id="KW-0863">Zinc-finger</keyword>
<proteinExistence type="inferred from homology"/>
<dbReference type="EMBL" id="BX119962">
    <property type="status" value="NOT_ANNOTATED_CDS"/>
    <property type="molecule type" value="Genomic_DNA"/>
</dbReference>
<dbReference type="RefSeq" id="NP_001038383.2">
    <property type="nucleotide sequence ID" value="NM_001044918.2"/>
</dbReference>
<dbReference type="SMR" id="Q1LY51"/>
<dbReference type="FunCoup" id="Q1LY51">
    <property type="interactions" value="1096"/>
</dbReference>
<dbReference type="STRING" id="7955.ENSDARP00000082791"/>
<dbReference type="PaxDb" id="7955-ENSDARP00000082791"/>
<dbReference type="Ensembl" id="ENSDART00000088358">
    <property type="protein sequence ID" value="ENSDARP00000082791"/>
    <property type="gene ID" value="ENSDARG00000061718"/>
</dbReference>
<dbReference type="GeneID" id="560056"/>
<dbReference type="KEGG" id="dre:560056"/>
<dbReference type="AGR" id="ZFIN:ZDB-GENE-060503-775"/>
<dbReference type="CTD" id="619279"/>
<dbReference type="ZFIN" id="ZDB-GENE-060503-775">
    <property type="gene designation" value="znf704"/>
</dbReference>
<dbReference type="eggNOG" id="ENOG502QTDT">
    <property type="taxonomic scope" value="Eukaryota"/>
</dbReference>
<dbReference type="HOGENOM" id="CLU_032989_2_0_1"/>
<dbReference type="InParanoid" id="Q1LY51"/>
<dbReference type="OMA" id="QKVEGSC"/>
<dbReference type="OrthoDB" id="5950721at2759"/>
<dbReference type="PhylomeDB" id="Q1LY51"/>
<dbReference type="TreeFam" id="TF326610"/>
<dbReference type="PRO" id="PR:Q1LY51"/>
<dbReference type="Proteomes" id="UP000000437">
    <property type="component" value="Alternate scaffold 19"/>
</dbReference>
<dbReference type="Proteomes" id="UP000000437">
    <property type="component" value="Chromosome 19"/>
</dbReference>
<dbReference type="Bgee" id="ENSDARG00000061718">
    <property type="expression patterns" value="Expressed in retina and 15 other cell types or tissues"/>
</dbReference>
<dbReference type="GO" id="GO:0005634">
    <property type="term" value="C:nucleus"/>
    <property type="evidence" value="ECO:0000318"/>
    <property type="project" value="GO_Central"/>
</dbReference>
<dbReference type="GO" id="GO:0003700">
    <property type="term" value="F:DNA-binding transcription factor activity"/>
    <property type="evidence" value="ECO:0000318"/>
    <property type="project" value="GO_Central"/>
</dbReference>
<dbReference type="GO" id="GO:0000978">
    <property type="term" value="F:RNA polymerase II cis-regulatory region sequence-specific DNA binding"/>
    <property type="evidence" value="ECO:0000318"/>
    <property type="project" value="GO_Central"/>
</dbReference>
<dbReference type="GO" id="GO:0008270">
    <property type="term" value="F:zinc ion binding"/>
    <property type="evidence" value="ECO:0007669"/>
    <property type="project" value="UniProtKB-KW"/>
</dbReference>
<dbReference type="GO" id="GO:0006357">
    <property type="term" value="P:regulation of transcription by RNA polymerase II"/>
    <property type="evidence" value="ECO:0000318"/>
    <property type="project" value="GO_Central"/>
</dbReference>
<dbReference type="InterPro" id="IPR052253">
    <property type="entry name" value="CR1/CR2-DNA-binding_regulator"/>
</dbReference>
<dbReference type="InterPro" id="IPR031940">
    <property type="entry name" value="DUF4772"/>
</dbReference>
<dbReference type="InterPro" id="IPR013087">
    <property type="entry name" value="Znf_C2H2_type"/>
</dbReference>
<dbReference type="PANTHER" id="PTHR13006">
    <property type="entry name" value="PAPILLOMAVIRUS REGULATORY FACTOR PRF-1"/>
    <property type="match status" value="1"/>
</dbReference>
<dbReference type="PANTHER" id="PTHR13006:SF7">
    <property type="entry name" value="ZINC FINGER PROTEIN 704"/>
    <property type="match status" value="1"/>
</dbReference>
<dbReference type="Pfam" id="PF15997">
    <property type="entry name" value="DUF4772"/>
    <property type="match status" value="1"/>
</dbReference>
<dbReference type="SMART" id="SM01366">
    <property type="entry name" value="c-clamp"/>
    <property type="match status" value="1"/>
</dbReference>
<dbReference type="SMART" id="SM00355">
    <property type="entry name" value="ZnF_C2H2"/>
    <property type="match status" value="1"/>
</dbReference>
<dbReference type="PROSITE" id="PS00028">
    <property type="entry name" value="ZINC_FINGER_C2H2_1"/>
    <property type="match status" value="1"/>
</dbReference>
<dbReference type="PROSITE" id="PS50157">
    <property type="entry name" value="ZINC_FINGER_C2H2_2"/>
    <property type="match status" value="1"/>
</dbReference>
<organism>
    <name type="scientific">Danio rerio</name>
    <name type="common">Zebrafish</name>
    <name type="synonym">Brachydanio rerio</name>
    <dbReference type="NCBI Taxonomy" id="7955"/>
    <lineage>
        <taxon>Eukaryota</taxon>
        <taxon>Metazoa</taxon>
        <taxon>Chordata</taxon>
        <taxon>Craniata</taxon>
        <taxon>Vertebrata</taxon>
        <taxon>Euteleostomi</taxon>
        <taxon>Actinopterygii</taxon>
        <taxon>Neopterygii</taxon>
        <taxon>Teleostei</taxon>
        <taxon>Ostariophysi</taxon>
        <taxon>Cypriniformes</taxon>
        <taxon>Danionidae</taxon>
        <taxon>Danioninae</taxon>
        <taxon>Danio</taxon>
    </lineage>
</organism>
<evidence type="ECO:0000250" key="1">
    <source>
        <dbReference type="UniProtKB" id="Q9ERQ3"/>
    </source>
</evidence>
<evidence type="ECO:0000255" key="2">
    <source>
        <dbReference type="PROSITE-ProRule" id="PRU00042"/>
    </source>
</evidence>
<evidence type="ECO:0000256" key="3">
    <source>
        <dbReference type="SAM" id="MobiDB-lite"/>
    </source>
</evidence>
<reference key="1">
    <citation type="journal article" date="2013" name="Nature">
        <title>The zebrafish reference genome sequence and its relationship to the human genome.</title>
        <authorList>
            <person name="Howe K."/>
            <person name="Clark M.D."/>
            <person name="Torroja C.F."/>
            <person name="Torrance J."/>
            <person name="Berthelot C."/>
            <person name="Muffato M."/>
            <person name="Collins J.E."/>
            <person name="Humphray S."/>
            <person name="McLaren K."/>
            <person name="Matthews L."/>
            <person name="McLaren S."/>
            <person name="Sealy I."/>
            <person name="Caccamo M."/>
            <person name="Churcher C."/>
            <person name="Scott C."/>
            <person name="Barrett J.C."/>
            <person name="Koch R."/>
            <person name="Rauch G.J."/>
            <person name="White S."/>
            <person name="Chow W."/>
            <person name="Kilian B."/>
            <person name="Quintais L.T."/>
            <person name="Guerra-Assuncao J.A."/>
            <person name="Zhou Y."/>
            <person name="Gu Y."/>
            <person name="Yen J."/>
            <person name="Vogel J.H."/>
            <person name="Eyre T."/>
            <person name="Redmond S."/>
            <person name="Banerjee R."/>
            <person name="Chi J."/>
            <person name="Fu B."/>
            <person name="Langley E."/>
            <person name="Maguire S.F."/>
            <person name="Laird G.K."/>
            <person name="Lloyd D."/>
            <person name="Kenyon E."/>
            <person name="Donaldson S."/>
            <person name="Sehra H."/>
            <person name="Almeida-King J."/>
            <person name="Loveland J."/>
            <person name="Trevanion S."/>
            <person name="Jones M."/>
            <person name="Quail M."/>
            <person name="Willey D."/>
            <person name="Hunt A."/>
            <person name="Burton J."/>
            <person name="Sims S."/>
            <person name="McLay K."/>
            <person name="Plumb B."/>
            <person name="Davis J."/>
            <person name="Clee C."/>
            <person name="Oliver K."/>
            <person name="Clark R."/>
            <person name="Riddle C."/>
            <person name="Elliot D."/>
            <person name="Threadgold G."/>
            <person name="Harden G."/>
            <person name="Ware D."/>
            <person name="Begum S."/>
            <person name="Mortimore B."/>
            <person name="Kerry G."/>
            <person name="Heath P."/>
            <person name="Phillimore B."/>
            <person name="Tracey A."/>
            <person name="Corby N."/>
            <person name="Dunn M."/>
            <person name="Johnson C."/>
            <person name="Wood J."/>
            <person name="Clark S."/>
            <person name="Pelan S."/>
            <person name="Griffiths G."/>
            <person name="Smith M."/>
            <person name="Glithero R."/>
            <person name="Howden P."/>
            <person name="Barker N."/>
            <person name="Lloyd C."/>
            <person name="Stevens C."/>
            <person name="Harley J."/>
            <person name="Holt K."/>
            <person name="Panagiotidis G."/>
            <person name="Lovell J."/>
            <person name="Beasley H."/>
            <person name="Henderson C."/>
            <person name="Gordon D."/>
            <person name="Auger K."/>
            <person name="Wright D."/>
            <person name="Collins J."/>
            <person name="Raisen C."/>
            <person name="Dyer L."/>
            <person name="Leung K."/>
            <person name="Robertson L."/>
            <person name="Ambridge K."/>
            <person name="Leongamornlert D."/>
            <person name="McGuire S."/>
            <person name="Gilderthorp R."/>
            <person name="Griffiths C."/>
            <person name="Manthravadi D."/>
            <person name="Nichol S."/>
            <person name="Barker G."/>
            <person name="Whitehead S."/>
            <person name="Kay M."/>
            <person name="Brown J."/>
            <person name="Murnane C."/>
            <person name="Gray E."/>
            <person name="Humphries M."/>
            <person name="Sycamore N."/>
            <person name="Barker D."/>
            <person name="Saunders D."/>
            <person name="Wallis J."/>
            <person name="Babbage A."/>
            <person name="Hammond S."/>
            <person name="Mashreghi-Mohammadi M."/>
            <person name="Barr L."/>
            <person name="Martin S."/>
            <person name="Wray P."/>
            <person name="Ellington A."/>
            <person name="Matthews N."/>
            <person name="Ellwood M."/>
            <person name="Woodmansey R."/>
            <person name="Clark G."/>
            <person name="Cooper J."/>
            <person name="Tromans A."/>
            <person name="Grafham D."/>
            <person name="Skuce C."/>
            <person name="Pandian R."/>
            <person name="Andrews R."/>
            <person name="Harrison E."/>
            <person name="Kimberley A."/>
            <person name="Garnett J."/>
            <person name="Fosker N."/>
            <person name="Hall R."/>
            <person name="Garner P."/>
            <person name="Kelly D."/>
            <person name="Bird C."/>
            <person name="Palmer S."/>
            <person name="Gehring I."/>
            <person name="Berger A."/>
            <person name="Dooley C.M."/>
            <person name="Ersan-Urun Z."/>
            <person name="Eser C."/>
            <person name="Geiger H."/>
            <person name="Geisler M."/>
            <person name="Karotki L."/>
            <person name="Kirn A."/>
            <person name="Konantz J."/>
            <person name="Konantz M."/>
            <person name="Oberlander M."/>
            <person name="Rudolph-Geiger S."/>
            <person name="Teucke M."/>
            <person name="Lanz C."/>
            <person name="Raddatz G."/>
            <person name="Osoegawa K."/>
            <person name="Zhu B."/>
            <person name="Rapp A."/>
            <person name="Widaa S."/>
            <person name="Langford C."/>
            <person name="Yang F."/>
            <person name="Schuster S.C."/>
            <person name="Carter N.P."/>
            <person name="Harrow J."/>
            <person name="Ning Z."/>
            <person name="Herrero J."/>
            <person name="Searle S.M."/>
            <person name="Enright A."/>
            <person name="Geisler R."/>
            <person name="Plasterk R.H."/>
            <person name="Lee C."/>
            <person name="Westerfield M."/>
            <person name="de Jong P.J."/>
            <person name="Zon L.I."/>
            <person name="Postlethwait J.H."/>
            <person name="Nusslein-Volhard C."/>
            <person name="Hubbard T.J."/>
            <person name="Roest Crollius H."/>
            <person name="Rogers J."/>
            <person name="Stemple D.L."/>
        </authorList>
    </citation>
    <scope>NUCLEOTIDE SEQUENCE [LARGE SCALE GENOMIC DNA]</scope>
    <source>
        <strain>Tuebingen</strain>
    </source>
</reference>
<accession>Q1LY51</accession>
<protein>
    <recommendedName>
        <fullName>Zinc finger protein 704</fullName>
    </recommendedName>
</protein>